<gene>
    <name type="ORF">CG3062</name>
</gene>
<reference key="1">
    <citation type="journal article" date="2000" name="Science">
        <title>The genome sequence of Drosophila melanogaster.</title>
        <authorList>
            <person name="Adams M.D."/>
            <person name="Celniker S.E."/>
            <person name="Holt R.A."/>
            <person name="Evans C.A."/>
            <person name="Gocayne J.D."/>
            <person name="Amanatides P.G."/>
            <person name="Scherer S.E."/>
            <person name="Li P.W."/>
            <person name="Hoskins R.A."/>
            <person name="Galle R.F."/>
            <person name="George R.A."/>
            <person name="Lewis S.E."/>
            <person name="Richards S."/>
            <person name="Ashburner M."/>
            <person name="Henderson S.N."/>
            <person name="Sutton G.G."/>
            <person name="Wortman J.R."/>
            <person name="Yandell M.D."/>
            <person name="Zhang Q."/>
            <person name="Chen L.X."/>
            <person name="Brandon R.C."/>
            <person name="Rogers Y.-H.C."/>
            <person name="Blazej R.G."/>
            <person name="Champe M."/>
            <person name="Pfeiffer B.D."/>
            <person name="Wan K.H."/>
            <person name="Doyle C."/>
            <person name="Baxter E.G."/>
            <person name="Helt G."/>
            <person name="Nelson C.R."/>
            <person name="Miklos G.L.G."/>
            <person name="Abril J.F."/>
            <person name="Agbayani A."/>
            <person name="An H.-J."/>
            <person name="Andrews-Pfannkoch C."/>
            <person name="Baldwin D."/>
            <person name="Ballew R.M."/>
            <person name="Basu A."/>
            <person name="Baxendale J."/>
            <person name="Bayraktaroglu L."/>
            <person name="Beasley E.M."/>
            <person name="Beeson K.Y."/>
            <person name="Benos P.V."/>
            <person name="Berman B.P."/>
            <person name="Bhandari D."/>
            <person name="Bolshakov S."/>
            <person name="Borkova D."/>
            <person name="Botchan M.R."/>
            <person name="Bouck J."/>
            <person name="Brokstein P."/>
            <person name="Brottier P."/>
            <person name="Burtis K.C."/>
            <person name="Busam D.A."/>
            <person name="Butler H."/>
            <person name="Cadieu E."/>
            <person name="Center A."/>
            <person name="Chandra I."/>
            <person name="Cherry J.M."/>
            <person name="Cawley S."/>
            <person name="Dahlke C."/>
            <person name="Davenport L.B."/>
            <person name="Davies P."/>
            <person name="de Pablos B."/>
            <person name="Delcher A."/>
            <person name="Deng Z."/>
            <person name="Mays A.D."/>
            <person name="Dew I."/>
            <person name="Dietz S.M."/>
            <person name="Dodson K."/>
            <person name="Doup L.E."/>
            <person name="Downes M."/>
            <person name="Dugan-Rocha S."/>
            <person name="Dunkov B.C."/>
            <person name="Dunn P."/>
            <person name="Durbin K.J."/>
            <person name="Evangelista C.C."/>
            <person name="Ferraz C."/>
            <person name="Ferriera S."/>
            <person name="Fleischmann W."/>
            <person name="Fosler C."/>
            <person name="Gabrielian A.E."/>
            <person name="Garg N.S."/>
            <person name="Gelbart W.M."/>
            <person name="Glasser K."/>
            <person name="Glodek A."/>
            <person name="Gong F."/>
            <person name="Gorrell J.H."/>
            <person name="Gu Z."/>
            <person name="Guan P."/>
            <person name="Harris M."/>
            <person name="Harris N.L."/>
            <person name="Harvey D.A."/>
            <person name="Heiman T.J."/>
            <person name="Hernandez J.R."/>
            <person name="Houck J."/>
            <person name="Hostin D."/>
            <person name="Houston K.A."/>
            <person name="Howland T.J."/>
            <person name="Wei M.-H."/>
            <person name="Ibegwam C."/>
            <person name="Jalali M."/>
            <person name="Kalush F."/>
            <person name="Karpen G.H."/>
            <person name="Ke Z."/>
            <person name="Kennison J.A."/>
            <person name="Ketchum K.A."/>
            <person name="Kimmel B.E."/>
            <person name="Kodira C.D."/>
            <person name="Kraft C.L."/>
            <person name="Kravitz S."/>
            <person name="Kulp D."/>
            <person name="Lai Z."/>
            <person name="Lasko P."/>
            <person name="Lei Y."/>
            <person name="Levitsky A.A."/>
            <person name="Li J.H."/>
            <person name="Li Z."/>
            <person name="Liang Y."/>
            <person name="Lin X."/>
            <person name="Liu X."/>
            <person name="Mattei B."/>
            <person name="McIntosh T.C."/>
            <person name="McLeod M.P."/>
            <person name="McPherson D."/>
            <person name="Merkulov G."/>
            <person name="Milshina N.V."/>
            <person name="Mobarry C."/>
            <person name="Morris J."/>
            <person name="Moshrefi A."/>
            <person name="Mount S.M."/>
            <person name="Moy M."/>
            <person name="Murphy B."/>
            <person name="Murphy L."/>
            <person name="Muzny D.M."/>
            <person name="Nelson D.L."/>
            <person name="Nelson D.R."/>
            <person name="Nelson K.A."/>
            <person name="Nixon K."/>
            <person name="Nusskern D.R."/>
            <person name="Pacleb J.M."/>
            <person name="Palazzolo M."/>
            <person name="Pittman G.S."/>
            <person name="Pan S."/>
            <person name="Pollard J."/>
            <person name="Puri V."/>
            <person name="Reese M.G."/>
            <person name="Reinert K."/>
            <person name="Remington K."/>
            <person name="Saunders R.D.C."/>
            <person name="Scheeler F."/>
            <person name="Shen H."/>
            <person name="Shue B.C."/>
            <person name="Siden-Kiamos I."/>
            <person name="Simpson M."/>
            <person name="Skupski M.P."/>
            <person name="Smith T.J."/>
            <person name="Spier E."/>
            <person name="Spradling A.C."/>
            <person name="Stapleton M."/>
            <person name="Strong R."/>
            <person name="Sun E."/>
            <person name="Svirskas R."/>
            <person name="Tector C."/>
            <person name="Turner R."/>
            <person name="Venter E."/>
            <person name="Wang A.H."/>
            <person name="Wang X."/>
            <person name="Wang Z.-Y."/>
            <person name="Wassarman D.A."/>
            <person name="Weinstock G.M."/>
            <person name="Weissenbach J."/>
            <person name="Williams S.M."/>
            <person name="Woodage T."/>
            <person name="Worley K.C."/>
            <person name="Wu D."/>
            <person name="Yang S."/>
            <person name="Yao Q.A."/>
            <person name="Ye J."/>
            <person name="Yeh R.-F."/>
            <person name="Zaveri J.S."/>
            <person name="Zhan M."/>
            <person name="Zhang G."/>
            <person name="Zhao Q."/>
            <person name="Zheng L."/>
            <person name="Zheng X.H."/>
            <person name="Zhong F.N."/>
            <person name="Zhong W."/>
            <person name="Zhou X."/>
            <person name="Zhu S.C."/>
            <person name="Zhu X."/>
            <person name="Smith H.O."/>
            <person name="Gibbs R.A."/>
            <person name="Myers E.W."/>
            <person name="Rubin G.M."/>
            <person name="Venter J.C."/>
        </authorList>
    </citation>
    <scope>NUCLEOTIDE SEQUENCE [LARGE SCALE GENOMIC DNA]</scope>
    <source>
        <strain>Berkeley</strain>
    </source>
</reference>
<reference key="2">
    <citation type="journal article" date="2002" name="Genome Biol.">
        <title>Annotation of the Drosophila melanogaster euchromatic genome: a systematic review.</title>
        <authorList>
            <person name="Misra S."/>
            <person name="Crosby M.A."/>
            <person name="Mungall C.J."/>
            <person name="Matthews B.B."/>
            <person name="Campbell K.S."/>
            <person name="Hradecky P."/>
            <person name="Huang Y."/>
            <person name="Kaminker J.S."/>
            <person name="Millburn G.H."/>
            <person name="Prochnik S.E."/>
            <person name="Smith C.D."/>
            <person name="Tupy J.L."/>
            <person name="Whitfield E.J."/>
            <person name="Bayraktaroglu L."/>
            <person name="Berman B.P."/>
            <person name="Bettencourt B.R."/>
            <person name="Celniker S.E."/>
            <person name="de Grey A.D.N.J."/>
            <person name="Drysdale R.A."/>
            <person name="Harris N.L."/>
            <person name="Richter J."/>
            <person name="Russo S."/>
            <person name="Schroeder A.J."/>
            <person name="Shu S.Q."/>
            <person name="Stapleton M."/>
            <person name="Yamada C."/>
            <person name="Ashburner M."/>
            <person name="Gelbart W.M."/>
            <person name="Rubin G.M."/>
            <person name="Lewis S.E."/>
        </authorList>
    </citation>
    <scope>GENOME REANNOTATION</scope>
    <source>
        <strain>Berkeley</strain>
    </source>
</reference>
<reference key="3">
    <citation type="submission" date="2003-02" db="EMBL/GenBank/DDBJ databases">
        <authorList>
            <person name="Stapleton M."/>
            <person name="Brokstein P."/>
            <person name="Hong L."/>
            <person name="Agbayani A."/>
            <person name="Carlson J.W."/>
            <person name="Champe M."/>
            <person name="Chavez C."/>
            <person name="Dorsett V."/>
            <person name="Dresnek D."/>
            <person name="Farfan D."/>
            <person name="Frise E."/>
            <person name="George R.A."/>
            <person name="Gonzalez M."/>
            <person name="Guarin H."/>
            <person name="Kronmiller B."/>
            <person name="Li P.W."/>
            <person name="Liao G."/>
            <person name="Miranda A."/>
            <person name="Mungall C.J."/>
            <person name="Nunoo J."/>
            <person name="Pacleb J.M."/>
            <person name="Paragas V."/>
            <person name="Park S."/>
            <person name="Patel S."/>
            <person name="Phouanenavong S."/>
            <person name="Wan K.H."/>
            <person name="Yu C."/>
            <person name="Lewis S.E."/>
            <person name="Rubin G.M."/>
            <person name="Celniker S.E."/>
        </authorList>
    </citation>
    <scope>NUCLEOTIDE SEQUENCE [LARGE SCALE MRNA]</scope>
    <source>
        <strain>Berkeley</strain>
        <tissue>Testis</tissue>
    </source>
</reference>
<keyword id="KW-1185">Reference proteome</keyword>
<comment type="similarity">
    <text evidence="3">Belongs to the Flattop family.</text>
</comment>
<feature type="chain" id="PRO_0000371809" description="Protein Flattop homolog">
    <location>
        <begin position="1"/>
        <end position="252"/>
    </location>
</feature>
<feature type="region of interest" description="Disordered" evidence="2">
    <location>
        <begin position="177"/>
        <end position="252"/>
    </location>
</feature>
<feature type="compositionally biased region" description="Basic and acidic residues" evidence="2">
    <location>
        <begin position="218"/>
        <end position="252"/>
    </location>
</feature>
<feature type="sequence conflict" description="In Ref. 3; AAL68156." evidence="3" ref="3">
    <original>R</original>
    <variation>K</variation>
    <location>
        <position position="141"/>
    </location>
</feature>
<protein>
    <recommendedName>
        <fullName evidence="3">Protein Flattop homolog</fullName>
    </recommendedName>
    <alternativeName>
        <fullName evidence="1">Cilia- and flagella-associated protein 126</fullName>
    </alternativeName>
</protein>
<accession>Q9W4I5</accession>
<accession>Q8T8T0</accession>
<name>FLTOP_DROME</name>
<organism>
    <name type="scientific">Drosophila melanogaster</name>
    <name type="common">Fruit fly</name>
    <dbReference type="NCBI Taxonomy" id="7227"/>
    <lineage>
        <taxon>Eukaryota</taxon>
        <taxon>Metazoa</taxon>
        <taxon>Ecdysozoa</taxon>
        <taxon>Arthropoda</taxon>
        <taxon>Hexapoda</taxon>
        <taxon>Insecta</taxon>
        <taxon>Pterygota</taxon>
        <taxon>Neoptera</taxon>
        <taxon>Endopterygota</taxon>
        <taxon>Diptera</taxon>
        <taxon>Brachycera</taxon>
        <taxon>Muscomorpha</taxon>
        <taxon>Ephydroidea</taxon>
        <taxon>Drosophilidae</taxon>
        <taxon>Drosophila</taxon>
        <taxon>Sophophora</taxon>
    </lineage>
</organism>
<evidence type="ECO:0000250" key="1">
    <source>
        <dbReference type="UniProtKB" id="Q6P8X9"/>
    </source>
</evidence>
<evidence type="ECO:0000256" key="2">
    <source>
        <dbReference type="SAM" id="MobiDB-lite"/>
    </source>
</evidence>
<evidence type="ECO:0000305" key="3"/>
<sequence length="252" mass="28858">MALHFSAQQFEGRFQSKRLNNWEYPRFSPPRPRGLQKNAKVVAANNGHLLPEVIKEGNSFGQYRGTYELPRRITRAFCAHYDACLSGRYKFVDFPRDLCNCQRENRRALACDQRLTLGHKDDPYWMRERCQTKCEGLQKLRALSERSARCNRAKCDVVSEKTVKMTPKAIKTTGVATEKRRRKRTITAFSKGRTALHPNELTKPIPSSEKPAATVATPKDKPKDKPKDKEAGKKDKTKDKGKEKERKAAKGH</sequence>
<dbReference type="EMBL" id="AE014298">
    <property type="protein sequence ID" value="AAF45966.2"/>
    <property type="molecule type" value="Genomic_DNA"/>
</dbReference>
<dbReference type="EMBL" id="AY075289">
    <property type="protein sequence ID" value="AAL68156.2"/>
    <property type="status" value="ALT_SEQ"/>
    <property type="molecule type" value="mRNA"/>
</dbReference>
<dbReference type="RefSeq" id="NP_572177.2">
    <property type="nucleotide sequence ID" value="NM_131949.3"/>
</dbReference>
<dbReference type="BioGRID" id="57913">
    <property type="interactions" value="4"/>
</dbReference>
<dbReference type="FunCoup" id="Q9W4I5">
    <property type="interactions" value="1"/>
</dbReference>
<dbReference type="IntAct" id="Q9W4I5">
    <property type="interactions" value="2"/>
</dbReference>
<dbReference type="STRING" id="7227.FBpp0070660"/>
<dbReference type="PaxDb" id="7227-FBpp0070660"/>
<dbReference type="EnsemblMetazoa" id="FBtr0070692">
    <property type="protein sequence ID" value="FBpp0070660"/>
    <property type="gene ID" value="FBgn0025612"/>
</dbReference>
<dbReference type="GeneID" id="31396"/>
<dbReference type="KEGG" id="dme:Dmel_CG3062"/>
<dbReference type="UCSC" id="CG3062-RA">
    <property type="organism name" value="d. melanogaster"/>
</dbReference>
<dbReference type="AGR" id="FB:FBgn0025612"/>
<dbReference type="FlyBase" id="FBgn0025612">
    <property type="gene designation" value="CG3062"/>
</dbReference>
<dbReference type="VEuPathDB" id="VectorBase:FBgn0025612"/>
<dbReference type="eggNOG" id="ENOG502S5M4">
    <property type="taxonomic scope" value="Eukaryota"/>
</dbReference>
<dbReference type="GeneTree" id="ENSGT00390000001092"/>
<dbReference type="HOGENOM" id="CLU_079728_0_0_1"/>
<dbReference type="InParanoid" id="Q9W4I5"/>
<dbReference type="OMA" id="KYWKYPR"/>
<dbReference type="OrthoDB" id="521617at2759"/>
<dbReference type="PhylomeDB" id="Q9W4I5"/>
<dbReference type="BioGRID-ORCS" id="31396">
    <property type="hits" value="0 hits in 1 CRISPR screen"/>
</dbReference>
<dbReference type="GenomeRNAi" id="31396"/>
<dbReference type="PRO" id="PR:Q9W4I5"/>
<dbReference type="Proteomes" id="UP000000803">
    <property type="component" value="Chromosome X"/>
</dbReference>
<dbReference type="Bgee" id="FBgn0025612">
    <property type="expression patterns" value="Expressed in early-mid elongation-stage spermatid (Drosophila) in testis and 17 other cell types or tissues"/>
</dbReference>
<dbReference type="ExpressionAtlas" id="Q9W4I5">
    <property type="expression patterns" value="baseline and differential"/>
</dbReference>
<dbReference type="GO" id="GO:0036064">
    <property type="term" value="C:ciliary basal body"/>
    <property type="evidence" value="ECO:0000318"/>
    <property type="project" value="GO_Central"/>
</dbReference>
<dbReference type="GO" id="GO:0044782">
    <property type="term" value="P:cilium organization"/>
    <property type="evidence" value="ECO:0000318"/>
    <property type="project" value="GO_Central"/>
</dbReference>
<dbReference type="CDD" id="cd23705">
    <property type="entry name" value="Flattop"/>
    <property type="match status" value="1"/>
</dbReference>
<dbReference type="InterPro" id="IPR038797">
    <property type="entry name" value="Fltp"/>
</dbReference>
<dbReference type="PANTHER" id="PTHR34639">
    <property type="entry name" value="PROTEIN FLATTOP"/>
    <property type="match status" value="1"/>
</dbReference>
<dbReference type="PANTHER" id="PTHR34639:SF1">
    <property type="entry name" value="PROTEIN FLATTOP"/>
    <property type="match status" value="1"/>
</dbReference>
<dbReference type="Pfam" id="PF22611">
    <property type="entry name" value="CFAP126"/>
    <property type="match status" value="1"/>
</dbReference>
<proteinExistence type="evidence at transcript level"/>